<dbReference type="EC" id="2.5.1.19" evidence="1"/>
<dbReference type="EMBL" id="AE000511">
    <property type="protein sequence ID" value="AAD07470.1"/>
    <property type="molecule type" value="Genomic_DNA"/>
</dbReference>
<dbReference type="PIR" id="A64570">
    <property type="entry name" value="A64570"/>
</dbReference>
<dbReference type="RefSeq" id="NP_207199.1">
    <property type="nucleotide sequence ID" value="NC_000915.1"/>
</dbReference>
<dbReference type="RefSeq" id="WP_000570922.1">
    <property type="nucleotide sequence ID" value="NC_018939.1"/>
</dbReference>
<dbReference type="SMR" id="P56197"/>
<dbReference type="DIP" id="DIP-3563N"/>
<dbReference type="FunCoup" id="P56197">
    <property type="interactions" value="358"/>
</dbReference>
<dbReference type="IntAct" id="P56197">
    <property type="interactions" value="2"/>
</dbReference>
<dbReference type="MINT" id="P56197"/>
<dbReference type="STRING" id="85962.HP_0401"/>
<dbReference type="PaxDb" id="85962-C694_02035"/>
<dbReference type="EnsemblBacteria" id="AAD07470">
    <property type="protein sequence ID" value="AAD07470"/>
    <property type="gene ID" value="HP_0401"/>
</dbReference>
<dbReference type="KEGG" id="heo:C694_02035"/>
<dbReference type="KEGG" id="hpy:HP_0401"/>
<dbReference type="PATRIC" id="fig|85962.47.peg.425"/>
<dbReference type="eggNOG" id="COG0128">
    <property type="taxonomic scope" value="Bacteria"/>
</dbReference>
<dbReference type="InParanoid" id="P56197"/>
<dbReference type="OrthoDB" id="9809920at2"/>
<dbReference type="PhylomeDB" id="P56197"/>
<dbReference type="UniPathway" id="UPA00053">
    <property type="reaction ID" value="UER00089"/>
</dbReference>
<dbReference type="Proteomes" id="UP000000429">
    <property type="component" value="Chromosome"/>
</dbReference>
<dbReference type="GO" id="GO:0005737">
    <property type="term" value="C:cytoplasm"/>
    <property type="evidence" value="ECO:0007669"/>
    <property type="project" value="UniProtKB-SubCell"/>
</dbReference>
<dbReference type="GO" id="GO:0003866">
    <property type="term" value="F:3-phosphoshikimate 1-carboxyvinyltransferase activity"/>
    <property type="evidence" value="ECO:0000318"/>
    <property type="project" value="GO_Central"/>
</dbReference>
<dbReference type="GO" id="GO:0008652">
    <property type="term" value="P:amino acid biosynthetic process"/>
    <property type="evidence" value="ECO:0007669"/>
    <property type="project" value="UniProtKB-KW"/>
</dbReference>
<dbReference type="GO" id="GO:0009073">
    <property type="term" value="P:aromatic amino acid family biosynthetic process"/>
    <property type="evidence" value="ECO:0007669"/>
    <property type="project" value="UniProtKB-KW"/>
</dbReference>
<dbReference type="GO" id="GO:0009423">
    <property type="term" value="P:chorismate biosynthetic process"/>
    <property type="evidence" value="ECO:0000318"/>
    <property type="project" value="GO_Central"/>
</dbReference>
<dbReference type="CDD" id="cd01556">
    <property type="entry name" value="EPSP_synthase"/>
    <property type="match status" value="1"/>
</dbReference>
<dbReference type="FunFam" id="3.65.10.10:FF:000005">
    <property type="entry name" value="3-phosphoshikimate 1-carboxyvinyltransferase"/>
    <property type="match status" value="1"/>
</dbReference>
<dbReference type="Gene3D" id="3.65.10.10">
    <property type="entry name" value="Enolpyruvate transferase domain"/>
    <property type="match status" value="2"/>
</dbReference>
<dbReference type="HAMAP" id="MF_00210">
    <property type="entry name" value="EPSP_synth"/>
    <property type="match status" value="1"/>
</dbReference>
<dbReference type="InterPro" id="IPR001986">
    <property type="entry name" value="Enolpyruvate_Tfrase_dom"/>
</dbReference>
<dbReference type="InterPro" id="IPR036968">
    <property type="entry name" value="Enolpyruvate_Tfrase_sf"/>
</dbReference>
<dbReference type="InterPro" id="IPR006264">
    <property type="entry name" value="EPSP_synthase"/>
</dbReference>
<dbReference type="InterPro" id="IPR023193">
    <property type="entry name" value="EPSP_synthase_CS"/>
</dbReference>
<dbReference type="InterPro" id="IPR013792">
    <property type="entry name" value="RNA3'P_cycl/enolpyr_Trfase_a/b"/>
</dbReference>
<dbReference type="NCBIfam" id="TIGR01356">
    <property type="entry name" value="aroA"/>
    <property type="match status" value="1"/>
</dbReference>
<dbReference type="PANTHER" id="PTHR21090">
    <property type="entry name" value="AROM/DEHYDROQUINATE SYNTHASE"/>
    <property type="match status" value="1"/>
</dbReference>
<dbReference type="PANTHER" id="PTHR21090:SF5">
    <property type="entry name" value="PENTAFUNCTIONAL AROM POLYPEPTIDE"/>
    <property type="match status" value="1"/>
</dbReference>
<dbReference type="Pfam" id="PF00275">
    <property type="entry name" value="EPSP_synthase"/>
    <property type="match status" value="1"/>
</dbReference>
<dbReference type="PIRSF" id="PIRSF000505">
    <property type="entry name" value="EPSPS"/>
    <property type="match status" value="1"/>
</dbReference>
<dbReference type="SUPFAM" id="SSF55205">
    <property type="entry name" value="EPT/RTPC-like"/>
    <property type="match status" value="1"/>
</dbReference>
<dbReference type="PROSITE" id="PS00104">
    <property type="entry name" value="EPSP_SYNTHASE_1"/>
    <property type="match status" value="1"/>
</dbReference>
<dbReference type="PROSITE" id="PS00885">
    <property type="entry name" value="EPSP_SYNTHASE_2"/>
    <property type="match status" value="1"/>
</dbReference>
<evidence type="ECO:0000255" key="1">
    <source>
        <dbReference type="HAMAP-Rule" id="MF_00210"/>
    </source>
</evidence>
<evidence type="ECO:0000305" key="2"/>
<reference key="1">
    <citation type="journal article" date="1997" name="Nature">
        <title>The complete genome sequence of the gastric pathogen Helicobacter pylori.</title>
        <authorList>
            <person name="Tomb J.-F."/>
            <person name="White O."/>
            <person name="Kerlavage A.R."/>
            <person name="Clayton R.A."/>
            <person name="Sutton G.G."/>
            <person name="Fleischmann R.D."/>
            <person name="Ketchum K.A."/>
            <person name="Klenk H.-P."/>
            <person name="Gill S.R."/>
            <person name="Dougherty B.A."/>
            <person name="Nelson K.E."/>
            <person name="Quackenbush J."/>
            <person name="Zhou L."/>
            <person name="Kirkness E.F."/>
            <person name="Peterson S.N."/>
            <person name="Loftus B.J."/>
            <person name="Richardson D.L."/>
            <person name="Dodson R.J."/>
            <person name="Khalak H.G."/>
            <person name="Glodek A."/>
            <person name="McKenney K."/>
            <person name="FitzGerald L.M."/>
            <person name="Lee N."/>
            <person name="Adams M.D."/>
            <person name="Hickey E.K."/>
            <person name="Berg D.E."/>
            <person name="Gocayne J.D."/>
            <person name="Utterback T.R."/>
            <person name="Peterson J.D."/>
            <person name="Kelley J.M."/>
            <person name="Cotton M.D."/>
            <person name="Weidman J.F."/>
            <person name="Fujii C."/>
            <person name="Bowman C."/>
            <person name="Watthey L."/>
            <person name="Wallin E."/>
            <person name="Hayes W.S."/>
            <person name="Borodovsky M."/>
            <person name="Karp P.D."/>
            <person name="Smith H.O."/>
            <person name="Fraser C.M."/>
            <person name="Venter J.C."/>
        </authorList>
    </citation>
    <scope>NUCLEOTIDE SEQUENCE [LARGE SCALE GENOMIC DNA]</scope>
    <source>
        <strain>ATCC 700392 / 26695</strain>
    </source>
</reference>
<organism>
    <name type="scientific">Helicobacter pylori (strain ATCC 700392 / 26695)</name>
    <name type="common">Campylobacter pylori</name>
    <dbReference type="NCBI Taxonomy" id="85962"/>
    <lineage>
        <taxon>Bacteria</taxon>
        <taxon>Pseudomonadati</taxon>
        <taxon>Campylobacterota</taxon>
        <taxon>Epsilonproteobacteria</taxon>
        <taxon>Campylobacterales</taxon>
        <taxon>Helicobacteraceae</taxon>
        <taxon>Helicobacter</taxon>
    </lineage>
</organism>
<feature type="chain" id="PRO_0000088260" description="3-phosphoshikimate 1-carboxyvinyltransferase">
    <location>
        <begin position="1"/>
        <end position="429"/>
    </location>
</feature>
<feature type="active site" description="Proton acceptor" evidence="1">
    <location>
        <position position="302"/>
    </location>
</feature>
<feature type="binding site" evidence="1">
    <location>
        <position position="11"/>
    </location>
    <ligand>
        <name>3-phosphoshikimate</name>
        <dbReference type="ChEBI" id="CHEBI:145989"/>
    </ligand>
</feature>
<feature type="binding site" evidence="1">
    <location>
        <position position="11"/>
    </location>
    <ligand>
        <name>phosphoenolpyruvate</name>
        <dbReference type="ChEBI" id="CHEBI:58702"/>
    </ligand>
</feature>
<feature type="binding site" evidence="1">
    <location>
        <position position="12"/>
    </location>
    <ligand>
        <name>3-phosphoshikimate</name>
        <dbReference type="ChEBI" id="CHEBI:145989"/>
    </ligand>
</feature>
<feature type="binding site" evidence="1">
    <location>
        <position position="16"/>
    </location>
    <ligand>
        <name>3-phosphoshikimate</name>
        <dbReference type="ChEBI" id="CHEBI:145989"/>
    </ligand>
</feature>
<feature type="binding site" evidence="1">
    <location>
        <position position="82"/>
    </location>
    <ligand>
        <name>phosphoenolpyruvate</name>
        <dbReference type="ChEBI" id="CHEBI:58702"/>
    </ligand>
</feature>
<feature type="binding site" evidence="1">
    <location>
        <position position="110"/>
    </location>
    <ligand>
        <name>phosphoenolpyruvate</name>
        <dbReference type="ChEBI" id="CHEBI:58702"/>
    </ligand>
</feature>
<feature type="binding site" evidence="1">
    <location>
        <position position="155"/>
    </location>
    <ligand>
        <name>3-phosphoshikimate</name>
        <dbReference type="ChEBI" id="CHEBI:145989"/>
    </ligand>
</feature>
<feature type="binding site" evidence="1">
    <location>
        <position position="157"/>
    </location>
    <ligand>
        <name>3-phosphoshikimate</name>
        <dbReference type="ChEBI" id="CHEBI:145989"/>
    </ligand>
</feature>
<feature type="binding site" evidence="1">
    <location>
        <position position="157"/>
    </location>
    <ligand>
        <name>phosphoenolpyruvate</name>
        <dbReference type="ChEBI" id="CHEBI:58702"/>
    </ligand>
</feature>
<feature type="binding site" evidence="1">
    <location>
        <position position="302"/>
    </location>
    <ligand>
        <name>3-phosphoshikimate</name>
        <dbReference type="ChEBI" id="CHEBI:145989"/>
    </ligand>
</feature>
<feature type="binding site" evidence="1">
    <location>
        <position position="329"/>
    </location>
    <ligand>
        <name>3-phosphoshikimate</name>
        <dbReference type="ChEBI" id="CHEBI:145989"/>
    </ligand>
</feature>
<feature type="binding site" evidence="1">
    <location>
        <position position="333"/>
    </location>
    <ligand>
        <name>phosphoenolpyruvate</name>
        <dbReference type="ChEBI" id="CHEBI:58702"/>
    </ligand>
</feature>
<feature type="binding site" evidence="1">
    <location>
        <position position="385"/>
    </location>
    <ligand>
        <name>phosphoenolpyruvate</name>
        <dbReference type="ChEBI" id="CHEBI:58702"/>
    </ligand>
</feature>
<gene>
    <name evidence="1" type="primary">aroA</name>
    <name type="ordered locus">HP_0401</name>
</gene>
<accession>P56197</accession>
<keyword id="KW-0028">Amino-acid biosynthesis</keyword>
<keyword id="KW-0057">Aromatic amino acid biosynthesis</keyword>
<keyword id="KW-0963">Cytoplasm</keyword>
<keyword id="KW-1185">Reference proteome</keyword>
<keyword id="KW-0808">Transferase</keyword>
<proteinExistence type="inferred from homology"/>
<comment type="function">
    <text evidence="1">Catalyzes the transfer of the enolpyruvyl moiety of phosphoenolpyruvate (PEP) to the 5-hydroxyl of shikimate-3-phosphate (S3P) to produce enolpyruvyl shikimate-3-phosphate and inorganic phosphate.</text>
</comment>
<comment type="catalytic activity">
    <reaction evidence="1">
        <text>3-phosphoshikimate + phosphoenolpyruvate = 5-O-(1-carboxyvinyl)-3-phosphoshikimate + phosphate</text>
        <dbReference type="Rhea" id="RHEA:21256"/>
        <dbReference type="ChEBI" id="CHEBI:43474"/>
        <dbReference type="ChEBI" id="CHEBI:57701"/>
        <dbReference type="ChEBI" id="CHEBI:58702"/>
        <dbReference type="ChEBI" id="CHEBI:145989"/>
        <dbReference type="EC" id="2.5.1.19"/>
    </reaction>
    <physiologicalReaction direction="left-to-right" evidence="1">
        <dbReference type="Rhea" id="RHEA:21257"/>
    </physiologicalReaction>
</comment>
<comment type="pathway">
    <text evidence="1">Metabolic intermediate biosynthesis; chorismate biosynthesis; chorismate from D-erythrose 4-phosphate and phosphoenolpyruvate: step 6/7.</text>
</comment>
<comment type="subunit">
    <text evidence="1">Monomer.</text>
</comment>
<comment type="subcellular location">
    <subcellularLocation>
        <location evidence="1">Cytoplasm</location>
    </subcellularLocation>
</comment>
<comment type="similarity">
    <text evidence="1 2">Belongs to the EPSP synthase family.</text>
</comment>
<sequence length="429" mass="47241">MIELDINASDKSLSHRAVIFSLLAQKPCFVRNFLMGEDCLSSLEIAQNLGAKVENTAKNSFKITPPTTIKEPNKILNCNNSGTTMRLYSGLLSAQKGLFVLSGDNSLNARPMKRIIEPLKAFGAKILGREDNHFAPLVILGSPLKACHYESPIASAQVKSAFILSALQAQGASTYKESELSRNHTEIMLKSLGADIHNQDGVLKISPLEKPLEAFDFTIANDPSSAFFFALACAITPKSRLLLKNVLLNPTRIEAFEVLKKMGASIEYAIQSKDLEMIGDIYVEHAPLKAINIDQNIASLIDEIPALSIAMLFAKGKSMVKNAKDLRAKESDRIKAVVSNFKALGIECEEFEDGFYVEGLEDISPLKQRFSRIKPPLIKSFNDHRIAMSFAVLTLALPLEIDNLECANISFPQFKHLLNQFKKGSLNGN</sequence>
<name>AROA_HELPY</name>
<protein>
    <recommendedName>
        <fullName evidence="1">3-phosphoshikimate 1-carboxyvinyltransferase</fullName>
        <ecNumber evidence="1">2.5.1.19</ecNumber>
    </recommendedName>
    <alternativeName>
        <fullName evidence="1">5-enolpyruvylshikimate-3-phosphate synthase</fullName>
        <shortName evidence="1">EPSP synthase</shortName>
        <shortName evidence="1">EPSPS</shortName>
    </alternativeName>
</protein>